<comment type="function">
    <text evidence="1">Located at the top of the head of the 30S subunit, it contacts several helices of the 16S rRNA. In the 70S ribosome it contacts the 23S rRNA (bridge B1a) and protein L5 of the 50S subunit (bridge B1b), connecting the 2 subunits; these bridges are implicated in subunit movement.</text>
</comment>
<comment type="subunit">
    <text evidence="1">Part of the 30S ribosomal subunit. Forms a loose heterodimer with protein S19. Forms two bridges to the 50S subunit in the 70S ribosome.</text>
</comment>
<comment type="similarity">
    <text evidence="1">Belongs to the universal ribosomal protein uS13 family.</text>
</comment>
<accession>Q9V2W4</accession>
<sequence>MSSEEQEDVDEDIQYFVRIGQTDLDGTKTVERALAELGGVGRRVARIVADEAGVDRTATMGGLEDDAIESVTDAVDSFTEHAPAWLANRQNDFYTGENQHITGTDVELTRDQDINRMRMIRSYKGIRHERGQKVRGQRTKSTGRTEGTIGVNVEAIKEEQAEDDAADGGEE</sequence>
<feature type="chain" id="PRO_0000132179" description="Small ribosomal subunit protein uS13">
    <location>
        <begin position="1"/>
        <end position="171"/>
    </location>
</feature>
<feature type="region of interest" description="Disordered" evidence="2">
    <location>
        <begin position="128"/>
        <end position="171"/>
    </location>
</feature>
<feature type="compositionally biased region" description="Acidic residues" evidence="2">
    <location>
        <begin position="160"/>
        <end position="171"/>
    </location>
</feature>
<name>RS13_HALSA</name>
<gene>
    <name evidence="1" type="primary">rps13</name>
    <name type="ordered locus">VNG_1132G</name>
</gene>
<reference key="1">
    <citation type="journal article" date="1999" name="Biochem. Biophys. Res. Commun.">
        <title>Cloning, sequencing, and characterization of ribosomal protein and RNA polymerase genes from the region analogous to the alpha-operon of Escherichia coli in halophilic archaea, Halobacterium halobium.</title>
        <authorList>
            <person name="Sano K."/>
            <person name="Taguchi A."/>
            <person name="Furumoto H."/>
            <person name="Uda T."/>
            <person name="Itoh T."/>
        </authorList>
    </citation>
    <scope>NUCLEOTIDE SEQUENCE [GENOMIC DNA]</scope>
    <source>
        <strain>R1 / S9</strain>
    </source>
</reference>
<reference key="2">
    <citation type="journal article" date="2000" name="Proc. Natl. Acad. Sci. U.S.A.">
        <title>Genome sequence of Halobacterium species NRC-1.</title>
        <authorList>
            <person name="Ng W.V."/>
            <person name="Kennedy S.P."/>
            <person name="Mahairas G.G."/>
            <person name="Berquist B."/>
            <person name="Pan M."/>
            <person name="Shukla H.D."/>
            <person name="Lasky S.R."/>
            <person name="Baliga N.S."/>
            <person name="Thorsson V."/>
            <person name="Sbrogna J."/>
            <person name="Swartzell S."/>
            <person name="Weir D."/>
            <person name="Hall J."/>
            <person name="Dahl T.A."/>
            <person name="Welti R."/>
            <person name="Goo Y.A."/>
            <person name="Leithauser B."/>
            <person name="Keller K."/>
            <person name="Cruz R."/>
            <person name="Danson M.J."/>
            <person name="Hough D.W."/>
            <person name="Maddocks D.G."/>
            <person name="Jablonski P.E."/>
            <person name="Krebs M.P."/>
            <person name="Angevine C.M."/>
            <person name="Dale H."/>
            <person name="Isenbarger T.A."/>
            <person name="Peck R.F."/>
            <person name="Pohlschroder M."/>
            <person name="Spudich J.L."/>
            <person name="Jung K.-H."/>
            <person name="Alam M."/>
            <person name="Freitas T."/>
            <person name="Hou S."/>
            <person name="Daniels C.J."/>
            <person name="Dennis P.P."/>
            <person name="Omer A.D."/>
            <person name="Ebhardt H."/>
            <person name="Lowe T.M."/>
            <person name="Liang P."/>
            <person name="Riley M."/>
            <person name="Hood L."/>
            <person name="DasSarma S."/>
        </authorList>
    </citation>
    <scope>NUCLEOTIDE SEQUENCE [LARGE SCALE GENOMIC DNA]</scope>
    <source>
        <strain>ATCC 700922 / JCM 11081 / NRC-1</strain>
    </source>
</reference>
<protein>
    <recommendedName>
        <fullName evidence="1">Small ribosomal subunit protein uS13</fullName>
    </recommendedName>
    <alternativeName>
        <fullName evidence="3">30S ribosomal protein S13</fullName>
    </alternativeName>
    <alternativeName>
        <fullName>HS13</fullName>
    </alternativeName>
</protein>
<proteinExistence type="inferred from homology"/>
<evidence type="ECO:0000255" key="1">
    <source>
        <dbReference type="HAMAP-Rule" id="MF_01315"/>
    </source>
</evidence>
<evidence type="ECO:0000256" key="2">
    <source>
        <dbReference type="SAM" id="MobiDB-lite"/>
    </source>
</evidence>
<evidence type="ECO:0000305" key="3"/>
<dbReference type="EMBL" id="AB030282">
    <property type="protein sequence ID" value="BAA85895.1"/>
    <property type="molecule type" value="Genomic_DNA"/>
</dbReference>
<dbReference type="EMBL" id="AE004437">
    <property type="protein sequence ID" value="AAG19517.1"/>
    <property type="molecule type" value="Genomic_DNA"/>
</dbReference>
<dbReference type="PIR" id="A84269">
    <property type="entry name" value="A84269"/>
</dbReference>
<dbReference type="PIR" id="T43937">
    <property type="entry name" value="T43937"/>
</dbReference>
<dbReference type="RefSeq" id="WP_010902812.1">
    <property type="nucleotide sequence ID" value="NC_002607.1"/>
</dbReference>
<dbReference type="SMR" id="Q9V2W4"/>
<dbReference type="FunCoup" id="Q9V2W4">
    <property type="interactions" value="162"/>
</dbReference>
<dbReference type="STRING" id="64091.VNG_1132G"/>
<dbReference type="PaxDb" id="64091-VNG_1132G"/>
<dbReference type="KEGG" id="hal:VNG_1132G"/>
<dbReference type="PATRIC" id="fig|64091.14.peg.863"/>
<dbReference type="HOGENOM" id="CLU_103849_0_0_2"/>
<dbReference type="InParanoid" id="Q9V2W4"/>
<dbReference type="OrthoDB" id="372127at2157"/>
<dbReference type="PhylomeDB" id="Q9V2W4"/>
<dbReference type="Proteomes" id="UP000000554">
    <property type="component" value="Chromosome"/>
</dbReference>
<dbReference type="GO" id="GO:0005829">
    <property type="term" value="C:cytosol"/>
    <property type="evidence" value="ECO:0000318"/>
    <property type="project" value="GO_Central"/>
</dbReference>
<dbReference type="GO" id="GO:0015935">
    <property type="term" value="C:small ribosomal subunit"/>
    <property type="evidence" value="ECO:0000318"/>
    <property type="project" value="GO_Central"/>
</dbReference>
<dbReference type="GO" id="GO:0019843">
    <property type="term" value="F:rRNA binding"/>
    <property type="evidence" value="ECO:0007669"/>
    <property type="project" value="UniProtKB-UniRule"/>
</dbReference>
<dbReference type="GO" id="GO:0003735">
    <property type="term" value="F:structural constituent of ribosome"/>
    <property type="evidence" value="ECO:0007669"/>
    <property type="project" value="InterPro"/>
</dbReference>
<dbReference type="GO" id="GO:0006412">
    <property type="term" value="P:translation"/>
    <property type="evidence" value="ECO:0007669"/>
    <property type="project" value="UniProtKB-UniRule"/>
</dbReference>
<dbReference type="Gene3D" id="1.10.8.50">
    <property type="match status" value="1"/>
</dbReference>
<dbReference type="Gene3D" id="4.10.910.10">
    <property type="entry name" value="30s ribosomal protein s13, domain 2"/>
    <property type="match status" value="1"/>
</dbReference>
<dbReference type="HAMAP" id="MF_01315">
    <property type="entry name" value="Ribosomal_uS13"/>
    <property type="match status" value="1"/>
</dbReference>
<dbReference type="InterPro" id="IPR027437">
    <property type="entry name" value="Rbsml_uS13_C"/>
</dbReference>
<dbReference type="InterPro" id="IPR001892">
    <property type="entry name" value="Ribosomal_uS13"/>
</dbReference>
<dbReference type="InterPro" id="IPR010979">
    <property type="entry name" value="Ribosomal_uS13-like_H2TH"/>
</dbReference>
<dbReference type="InterPro" id="IPR019977">
    <property type="entry name" value="Ribosomal_uS13_archaeal"/>
</dbReference>
<dbReference type="InterPro" id="IPR018269">
    <property type="entry name" value="Ribosomal_uS13_CS"/>
</dbReference>
<dbReference type="NCBIfam" id="NF003140">
    <property type="entry name" value="PRK04053.1"/>
    <property type="match status" value="1"/>
</dbReference>
<dbReference type="NCBIfam" id="TIGR03629">
    <property type="entry name" value="uS13_arch"/>
    <property type="match status" value="1"/>
</dbReference>
<dbReference type="PANTHER" id="PTHR10871">
    <property type="entry name" value="30S RIBOSOMAL PROTEIN S13/40S RIBOSOMAL PROTEIN S18"/>
    <property type="match status" value="1"/>
</dbReference>
<dbReference type="PANTHER" id="PTHR10871:SF3">
    <property type="entry name" value="SMALL RIBOSOMAL SUBUNIT PROTEIN US13"/>
    <property type="match status" value="1"/>
</dbReference>
<dbReference type="Pfam" id="PF00416">
    <property type="entry name" value="Ribosomal_S13"/>
    <property type="match status" value="1"/>
</dbReference>
<dbReference type="PIRSF" id="PIRSF002134">
    <property type="entry name" value="Ribosomal_S13"/>
    <property type="match status" value="1"/>
</dbReference>
<dbReference type="SUPFAM" id="SSF46946">
    <property type="entry name" value="S13-like H2TH domain"/>
    <property type="match status" value="1"/>
</dbReference>
<dbReference type="PROSITE" id="PS00646">
    <property type="entry name" value="RIBOSOMAL_S13_1"/>
    <property type="match status" value="1"/>
</dbReference>
<dbReference type="PROSITE" id="PS50159">
    <property type="entry name" value="RIBOSOMAL_S13_2"/>
    <property type="match status" value="1"/>
</dbReference>
<organism>
    <name type="scientific">Halobacterium salinarum (strain ATCC 700922 / JCM 11081 / NRC-1)</name>
    <name type="common">Halobacterium halobium</name>
    <dbReference type="NCBI Taxonomy" id="64091"/>
    <lineage>
        <taxon>Archaea</taxon>
        <taxon>Methanobacteriati</taxon>
        <taxon>Methanobacteriota</taxon>
        <taxon>Stenosarchaea group</taxon>
        <taxon>Halobacteria</taxon>
        <taxon>Halobacteriales</taxon>
        <taxon>Halobacteriaceae</taxon>
        <taxon>Halobacterium</taxon>
        <taxon>Halobacterium salinarum NRC-34001</taxon>
    </lineage>
</organism>
<keyword id="KW-1185">Reference proteome</keyword>
<keyword id="KW-0687">Ribonucleoprotein</keyword>
<keyword id="KW-0689">Ribosomal protein</keyword>
<keyword id="KW-0694">RNA-binding</keyword>
<keyword id="KW-0699">rRNA-binding</keyword>